<comment type="function">
    <text evidence="1">Involved in DNA repair and RecF pathway recombination.</text>
</comment>
<comment type="similarity">
    <text evidence="1">Belongs to the RecO family.</text>
</comment>
<organism>
    <name type="scientific">Porphyromonas gingivalis (strain ATCC 33277 / DSM 20709 / CIP 103683 / JCM 12257 / NCTC 11834 / 2561)</name>
    <dbReference type="NCBI Taxonomy" id="431947"/>
    <lineage>
        <taxon>Bacteria</taxon>
        <taxon>Pseudomonadati</taxon>
        <taxon>Bacteroidota</taxon>
        <taxon>Bacteroidia</taxon>
        <taxon>Bacteroidales</taxon>
        <taxon>Porphyromonadaceae</taxon>
        <taxon>Porphyromonas</taxon>
    </lineage>
</organism>
<gene>
    <name evidence="1" type="primary">recO</name>
    <name type="ordered locus">PGN_1954</name>
</gene>
<proteinExistence type="inferred from homology"/>
<reference key="1">
    <citation type="journal article" date="2008" name="DNA Res.">
        <title>Determination of the genome sequence of Porphyromonas gingivalis strain ATCC 33277 and genomic comparison with strain W83 revealed extensive genome rearrangements in P. gingivalis.</title>
        <authorList>
            <person name="Naito M."/>
            <person name="Hirakawa H."/>
            <person name="Yamashita A."/>
            <person name="Ohara N."/>
            <person name="Shoji M."/>
            <person name="Yukitake H."/>
            <person name="Nakayama K."/>
            <person name="Toh H."/>
            <person name="Yoshimura F."/>
            <person name="Kuhara S."/>
            <person name="Hattori M."/>
            <person name="Hayashi T."/>
            <person name="Nakayama K."/>
        </authorList>
    </citation>
    <scope>NUCLEOTIDE SEQUENCE [LARGE SCALE GENOMIC DNA]</scope>
    <source>
        <strain>ATCC 33277 / DSM 20709 / CIP 103683 / JCM 12257 / NCTC 11834 / 2561</strain>
    </source>
</reference>
<accession>B2RM78</accession>
<sequence>MIIVSRAIVLHNTAYNDSYSIAHLFSRESGRVSYLIPRSSKRGKSGGSLRLLISPLNELEITAEHKQHRDLHFIKEAKLCSLHGRIQSDPVRNSIALFLAEFLYLILRLPEADTNLYDFVAFSIDKLEEMDGPMANFHLAFLFRLLVPLGLIPDLQFGGSVIPRWFDPADGRFVPNAPAHGRGIPPHQSTYLQLFRRITFDNMKAFRLSRAERRQVLDYLVDYYRFHLPPFPLLKTPDILSTLFD</sequence>
<name>RECO_PORG3</name>
<evidence type="ECO:0000255" key="1">
    <source>
        <dbReference type="HAMAP-Rule" id="MF_00201"/>
    </source>
</evidence>
<keyword id="KW-0227">DNA damage</keyword>
<keyword id="KW-0233">DNA recombination</keyword>
<keyword id="KW-0234">DNA repair</keyword>
<feature type="chain" id="PRO_1000193410" description="DNA repair protein RecO">
    <location>
        <begin position="1"/>
        <end position="245"/>
    </location>
</feature>
<dbReference type="EMBL" id="AP009380">
    <property type="protein sequence ID" value="BAG34473.1"/>
    <property type="molecule type" value="Genomic_DNA"/>
</dbReference>
<dbReference type="RefSeq" id="WP_012458638.1">
    <property type="nucleotide sequence ID" value="NC_010729.1"/>
</dbReference>
<dbReference type="SMR" id="B2RM78"/>
<dbReference type="GeneID" id="29257094"/>
<dbReference type="KEGG" id="pgn:PGN_1954"/>
<dbReference type="eggNOG" id="COG1381">
    <property type="taxonomic scope" value="Bacteria"/>
</dbReference>
<dbReference type="HOGENOM" id="CLU_087596_0_0_10"/>
<dbReference type="OrthoDB" id="9789152at2"/>
<dbReference type="BioCyc" id="PGIN431947:G1G2V-2186-MONOMER"/>
<dbReference type="Proteomes" id="UP000008842">
    <property type="component" value="Chromosome"/>
</dbReference>
<dbReference type="GO" id="GO:0043590">
    <property type="term" value="C:bacterial nucleoid"/>
    <property type="evidence" value="ECO:0007669"/>
    <property type="project" value="TreeGrafter"/>
</dbReference>
<dbReference type="GO" id="GO:0006310">
    <property type="term" value="P:DNA recombination"/>
    <property type="evidence" value="ECO:0007669"/>
    <property type="project" value="UniProtKB-UniRule"/>
</dbReference>
<dbReference type="GO" id="GO:0006302">
    <property type="term" value="P:double-strand break repair"/>
    <property type="evidence" value="ECO:0007669"/>
    <property type="project" value="TreeGrafter"/>
</dbReference>
<dbReference type="Gene3D" id="2.40.50.140">
    <property type="entry name" value="Nucleic acid-binding proteins"/>
    <property type="match status" value="1"/>
</dbReference>
<dbReference type="Gene3D" id="1.20.1440.120">
    <property type="entry name" value="Recombination protein O, C-terminal domain"/>
    <property type="match status" value="1"/>
</dbReference>
<dbReference type="Gene3D" id="6.20.220.20">
    <property type="entry name" value="Recombination protein O, zinc-binding domain"/>
    <property type="match status" value="1"/>
</dbReference>
<dbReference type="HAMAP" id="MF_00201">
    <property type="entry name" value="RecO"/>
    <property type="match status" value="1"/>
</dbReference>
<dbReference type="InterPro" id="IPR037278">
    <property type="entry name" value="ARFGAP/RecO"/>
</dbReference>
<dbReference type="InterPro" id="IPR022572">
    <property type="entry name" value="DNA_rep/recomb_RecO_N"/>
</dbReference>
<dbReference type="InterPro" id="IPR012340">
    <property type="entry name" value="NA-bd_OB-fold"/>
</dbReference>
<dbReference type="InterPro" id="IPR003717">
    <property type="entry name" value="RecO"/>
</dbReference>
<dbReference type="InterPro" id="IPR042242">
    <property type="entry name" value="RecO_C"/>
</dbReference>
<dbReference type="PANTHER" id="PTHR33991">
    <property type="entry name" value="DNA REPAIR PROTEIN RECO"/>
    <property type="match status" value="1"/>
</dbReference>
<dbReference type="PANTHER" id="PTHR33991:SF1">
    <property type="entry name" value="DNA REPAIR PROTEIN RECO"/>
    <property type="match status" value="1"/>
</dbReference>
<dbReference type="Pfam" id="PF02565">
    <property type="entry name" value="RecO_C"/>
    <property type="match status" value="1"/>
</dbReference>
<dbReference type="Pfam" id="PF11967">
    <property type="entry name" value="RecO_N"/>
    <property type="match status" value="1"/>
</dbReference>
<dbReference type="SUPFAM" id="SSF57863">
    <property type="entry name" value="ArfGap/RecO-like zinc finger"/>
    <property type="match status" value="1"/>
</dbReference>
<dbReference type="SUPFAM" id="SSF50249">
    <property type="entry name" value="Nucleic acid-binding proteins"/>
    <property type="match status" value="1"/>
</dbReference>
<protein>
    <recommendedName>
        <fullName evidence="1">DNA repair protein RecO</fullName>
    </recommendedName>
    <alternativeName>
        <fullName evidence="1">Recombination protein O</fullName>
    </alternativeName>
</protein>